<protein>
    <recommendedName>
        <fullName evidence="1">Ribonuclease H</fullName>
        <shortName evidence="1">RNase H</shortName>
        <ecNumber evidence="1">3.1.26.4</ecNumber>
    </recommendedName>
</protein>
<evidence type="ECO:0000255" key="1">
    <source>
        <dbReference type="HAMAP-Rule" id="MF_00042"/>
    </source>
</evidence>
<evidence type="ECO:0000255" key="2">
    <source>
        <dbReference type="PROSITE-ProRule" id="PRU00408"/>
    </source>
</evidence>
<feature type="chain" id="PRO_1000074637" description="Ribonuclease H">
    <location>
        <begin position="1"/>
        <end position="154"/>
    </location>
</feature>
<feature type="domain" description="RNase H type-1" evidence="2">
    <location>
        <begin position="3"/>
        <end position="144"/>
    </location>
</feature>
<feature type="binding site" evidence="1">
    <location>
        <position position="12"/>
    </location>
    <ligand>
        <name>Mg(2+)</name>
        <dbReference type="ChEBI" id="CHEBI:18420"/>
        <label>1</label>
    </ligand>
</feature>
<feature type="binding site" evidence="1">
    <location>
        <position position="12"/>
    </location>
    <ligand>
        <name>Mg(2+)</name>
        <dbReference type="ChEBI" id="CHEBI:18420"/>
        <label>2</label>
    </ligand>
</feature>
<feature type="binding site" evidence="1">
    <location>
        <position position="50"/>
    </location>
    <ligand>
        <name>Mg(2+)</name>
        <dbReference type="ChEBI" id="CHEBI:18420"/>
        <label>1</label>
    </ligand>
</feature>
<feature type="binding site" evidence="1">
    <location>
        <position position="72"/>
    </location>
    <ligand>
        <name>Mg(2+)</name>
        <dbReference type="ChEBI" id="CHEBI:18420"/>
        <label>1</label>
    </ligand>
</feature>
<feature type="binding site" evidence="1">
    <location>
        <position position="136"/>
    </location>
    <ligand>
        <name>Mg(2+)</name>
        <dbReference type="ChEBI" id="CHEBI:18420"/>
        <label>2</label>
    </ligand>
</feature>
<gene>
    <name evidence="1" type="primary">rnhA</name>
    <name type="ordered locus">BRADO6586</name>
</gene>
<name>RNH_BRASO</name>
<organism>
    <name type="scientific">Bradyrhizobium sp. (strain ORS 278)</name>
    <dbReference type="NCBI Taxonomy" id="114615"/>
    <lineage>
        <taxon>Bacteria</taxon>
        <taxon>Pseudomonadati</taxon>
        <taxon>Pseudomonadota</taxon>
        <taxon>Alphaproteobacteria</taxon>
        <taxon>Hyphomicrobiales</taxon>
        <taxon>Nitrobacteraceae</taxon>
        <taxon>Bradyrhizobium</taxon>
    </lineage>
</organism>
<dbReference type="EC" id="3.1.26.4" evidence="1"/>
<dbReference type="EMBL" id="CU234118">
    <property type="protein sequence ID" value="CAL80192.1"/>
    <property type="molecule type" value="Genomic_DNA"/>
</dbReference>
<dbReference type="SMR" id="A4Z216"/>
<dbReference type="STRING" id="114615.BRADO6586"/>
<dbReference type="KEGG" id="bra:BRADO6586"/>
<dbReference type="eggNOG" id="COG0328">
    <property type="taxonomic scope" value="Bacteria"/>
</dbReference>
<dbReference type="HOGENOM" id="CLU_030894_6_0_5"/>
<dbReference type="OrthoDB" id="7845843at2"/>
<dbReference type="Proteomes" id="UP000001994">
    <property type="component" value="Chromosome"/>
</dbReference>
<dbReference type="GO" id="GO:0005737">
    <property type="term" value="C:cytoplasm"/>
    <property type="evidence" value="ECO:0007669"/>
    <property type="project" value="UniProtKB-SubCell"/>
</dbReference>
<dbReference type="GO" id="GO:0000287">
    <property type="term" value="F:magnesium ion binding"/>
    <property type="evidence" value="ECO:0007669"/>
    <property type="project" value="UniProtKB-UniRule"/>
</dbReference>
<dbReference type="GO" id="GO:0003676">
    <property type="term" value="F:nucleic acid binding"/>
    <property type="evidence" value="ECO:0007669"/>
    <property type="project" value="InterPro"/>
</dbReference>
<dbReference type="GO" id="GO:0004523">
    <property type="term" value="F:RNA-DNA hybrid ribonuclease activity"/>
    <property type="evidence" value="ECO:0007669"/>
    <property type="project" value="UniProtKB-UniRule"/>
</dbReference>
<dbReference type="GO" id="GO:0043137">
    <property type="term" value="P:DNA replication, removal of RNA primer"/>
    <property type="evidence" value="ECO:0007669"/>
    <property type="project" value="TreeGrafter"/>
</dbReference>
<dbReference type="CDD" id="cd09278">
    <property type="entry name" value="RNase_HI_prokaryote_like"/>
    <property type="match status" value="1"/>
</dbReference>
<dbReference type="FunFam" id="3.30.420.10:FF:000008">
    <property type="entry name" value="Ribonuclease H"/>
    <property type="match status" value="1"/>
</dbReference>
<dbReference type="Gene3D" id="3.30.420.10">
    <property type="entry name" value="Ribonuclease H-like superfamily/Ribonuclease H"/>
    <property type="match status" value="1"/>
</dbReference>
<dbReference type="HAMAP" id="MF_00042">
    <property type="entry name" value="RNase_H"/>
    <property type="match status" value="1"/>
</dbReference>
<dbReference type="InterPro" id="IPR050092">
    <property type="entry name" value="RNase_H"/>
</dbReference>
<dbReference type="InterPro" id="IPR012337">
    <property type="entry name" value="RNaseH-like_sf"/>
</dbReference>
<dbReference type="InterPro" id="IPR002156">
    <property type="entry name" value="RNaseH_domain"/>
</dbReference>
<dbReference type="InterPro" id="IPR036397">
    <property type="entry name" value="RNaseH_sf"/>
</dbReference>
<dbReference type="InterPro" id="IPR022892">
    <property type="entry name" value="RNaseHI"/>
</dbReference>
<dbReference type="NCBIfam" id="NF001236">
    <property type="entry name" value="PRK00203.1"/>
    <property type="match status" value="1"/>
</dbReference>
<dbReference type="PANTHER" id="PTHR10642">
    <property type="entry name" value="RIBONUCLEASE H1"/>
    <property type="match status" value="1"/>
</dbReference>
<dbReference type="PANTHER" id="PTHR10642:SF26">
    <property type="entry name" value="RIBONUCLEASE H1"/>
    <property type="match status" value="1"/>
</dbReference>
<dbReference type="Pfam" id="PF00075">
    <property type="entry name" value="RNase_H"/>
    <property type="match status" value="1"/>
</dbReference>
<dbReference type="SUPFAM" id="SSF53098">
    <property type="entry name" value="Ribonuclease H-like"/>
    <property type="match status" value="1"/>
</dbReference>
<dbReference type="PROSITE" id="PS50879">
    <property type="entry name" value="RNASE_H_1"/>
    <property type="match status" value="1"/>
</dbReference>
<accession>A4Z216</accession>
<comment type="function">
    <text evidence="1">Endonuclease that specifically degrades the RNA of RNA-DNA hybrids.</text>
</comment>
<comment type="catalytic activity">
    <reaction evidence="1">
        <text>Endonucleolytic cleavage to 5'-phosphomonoester.</text>
        <dbReference type="EC" id="3.1.26.4"/>
    </reaction>
</comment>
<comment type="cofactor">
    <cofactor evidence="1">
        <name>Mg(2+)</name>
        <dbReference type="ChEBI" id="CHEBI:18420"/>
    </cofactor>
    <text evidence="1">Binds 1 Mg(2+) ion per subunit. May bind a second metal ion at a regulatory site, or after substrate binding.</text>
</comment>
<comment type="subunit">
    <text evidence="1">Monomer.</text>
</comment>
<comment type="subcellular location">
    <subcellularLocation>
        <location evidence="1">Cytoplasm</location>
    </subcellularLocation>
</comment>
<comment type="similarity">
    <text evidence="1">Belongs to the RNase H family.</text>
</comment>
<proteinExistence type="inferred from homology"/>
<keyword id="KW-0963">Cytoplasm</keyword>
<keyword id="KW-0255">Endonuclease</keyword>
<keyword id="KW-0378">Hydrolase</keyword>
<keyword id="KW-0460">Magnesium</keyword>
<keyword id="KW-0479">Metal-binding</keyword>
<keyword id="KW-0540">Nuclease</keyword>
<keyword id="KW-1185">Reference proteome</keyword>
<reference key="1">
    <citation type="journal article" date="2007" name="Science">
        <title>Legumes symbioses: absence of nod genes in photosynthetic bradyrhizobia.</title>
        <authorList>
            <person name="Giraud E."/>
            <person name="Moulin L."/>
            <person name="Vallenet D."/>
            <person name="Barbe V."/>
            <person name="Cytryn E."/>
            <person name="Avarre J.-C."/>
            <person name="Jaubert M."/>
            <person name="Simon D."/>
            <person name="Cartieaux F."/>
            <person name="Prin Y."/>
            <person name="Bena G."/>
            <person name="Hannibal L."/>
            <person name="Fardoux J."/>
            <person name="Kojadinovic M."/>
            <person name="Vuillet L."/>
            <person name="Lajus A."/>
            <person name="Cruveiller S."/>
            <person name="Rouy Z."/>
            <person name="Mangenot S."/>
            <person name="Segurens B."/>
            <person name="Dossat C."/>
            <person name="Franck W.L."/>
            <person name="Chang W.-S."/>
            <person name="Saunders E."/>
            <person name="Bruce D."/>
            <person name="Richardson P."/>
            <person name="Normand P."/>
            <person name="Dreyfus B."/>
            <person name="Pignol D."/>
            <person name="Stacey G."/>
            <person name="Emerich D."/>
            <person name="Vermeglio A."/>
            <person name="Medigue C."/>
            <person name="Sadowsky M."/>
        </authorList>
    </citation>
    <scope>NUCLEOTIDE SEQUENCE [LARGE SCALE GENOMIC DNA]</scope>
    <source>
        <strain>ORS 278</strain>
    </source>
</reference>
<sequence length="154" mass="17198">MSELPVVSIFTDGACSGNPGPGGWGAILRFGDKEKELKGGEPHTTNNRMELMAAISALEALKKSCQVELYTDSQYVRQGITGWIHGWKRNGWKTADKKPVKNAELWQRLDAALKPHKINWHWVKGHAGHPENERADQLARDGVAMARMQKNVRS</sequence>